<dbReference type="EC" id="3.6.5.-"/>
<dbReference type="EMBL" id="DS480441">
    <property type="protein sequence ID" value="EDO15862.1"/>
    <property type="molecule type" value="Genomic_DNA"/>
</dbReference>
<dbReference type="RefSeq" id="XP_001643720.1">
    <property type="nucleotide sequence ID" value="XM_001643670.1"/>
</dbReference>
<dbReference type="SMR" id="A7TPD4"/>
<dbReference type="FunCoup" id="A7TPD4">
    <property type="interactions" value="746"/>
</dbReference>
<dbReference type="STRING" id="436907.A7TPD4"/>
<dbReference type="GeneID" id="5543970"/>
<dbReference type="KEGG" id="vpo:Kpol_1009p8"/>
<dbReference type="eggNOG" id="KOG0462">
    <property type="taxonomic scope" value="Eukaryota"/>
</dbReference>
<dbReference type="HOGENOM" id="CLU_009995_3_1_1"/>
<dbReference type="InParanoid" id="A7TPD4"/>
<dbReference type="OMA" id="QVKCDEN"/>
<dbReference type="OrthoDB" id="1074at2759"/>
<dbReference type="PhylomeDB" id="A7TPD4"/>
<dbReference type="Proteomes" id="UP000000267">
    <property type="component" value="Unassembled WGS sequence"/>
</dbReference>
<dbReference type="GO" id="GO:0005743">
    <property type="term" value="C:mitochondrial inner membrane"/>
    <property type="evidence" value="ECO:0007669"/>
    <property type="project" value="UniProtKB-SubCell"/>
</dbReference>
<dbReference type="GO" id="GO:0005759">
    <property type="term" value="C:mitochondrial matrix"/>
    <property type="evidence" value="ECO:0007669"/>
    <property type="project" value="UniProtKB-UniRule"/>
</dbReference>
<dbReference type="GO" id="GO:0005525">
    <property type="term" value="F:GTP binding"/>
    <property type="evidence" value="ECO:0007669"/>
    <property type="project" value="UniProtKB-UniRule"/>
</dbReference>
<dbReference type="GO" id="GO:0003924">
    <property type="term" value="F:GTPase activity"/>
    <property type="evidence" value="ECO:0007669"/>
    <property type="project" value="UniProtKB-UniRule"/>
</dbReference>
<dbReference type="GO" id="GO:0097177">
    <property type="term" value="F:mitochondrial ribosome binding"/>
    <property type="evidence" value="ECO:0007669"/>
    <property type="project" value="EnsemblFungi"/>
</dbReference>
<dbReference type="GO" id="GO:0045727">
    <property type="term" value="P:positive regulation of translation"/>
    <property type="evidence" value="ECO:0007669"/>
    <property type="project" value="UniProtKB-UniRule"/>
</dbReference>
<dbReference type="GO" id="GO:0006412">
    <property type="term" value="P:translation"/>
    <property type="evidence" value="ECO:0007669"/>
    <property type="project" value="UniProtKB-KW"/>
</dbReference>
<dbReference type="CDD" id="cd16260">
    <property type="entry name" value="EF4_III"/>
    <property type="match status" value="1"/>
</dbReference>
<dbReference type="CDD" id="cd01890">
    <property type="entry name" value="LepA"/>
    <property type="match status" value="1"/>
</dbReference>
<dbReference type="CDD" id="cd03709">
    <property type="entry name" value="lepA_C"/>
    <property type="match status" value="1"/>
</dbReference>
<dbReference type="FunFam" id="3.40.50.300:FF:000078">
    <property type="entry name" value="Elongation factor 4"/>
    <property type="match status" value="1"/>
</dbReference>
<dbReference type="FunFam" id="2.40.30.10:FF:000015">
    <property type="entry name" value="Translation factor GUF1, mitochondrial"/>
    <property type="match status" value="1"/>
</dbReference>
<dbReference type="FunFam" id="3.30.70.240:FF:000007">
    <property type="entry name" value="Translation factor GUF1, mitochondrial"/>
    <property type="match status" value="1"/>
</dbReference>
<dbReference type="FunFam" id="3.30.70.2570:FF:000001">
    <property type="entry name" value="Translation factor GUF1, mitochondrial"/>
    <property type="match status" value="1"/>
</dbReference>
<dbReference type="FunFam" id="3.30.70.870:FF:000004">
    <property type="entry name" value="Translation factor GUF1, mitochondrial"/>
    <property type="match status" value="1"/>
</dbReference>
<dbReference type="Gene3D" id="3.30.70.240">
    <property type="match status" value="1"/>
</dbReference>
<dbReference type="Gene3D" id="3.30.70.2570">
    <property type="entry name" value="Elongation factor 4, C-terminal domain"/>
    <property type="match status" value="1"/>
</dbReference>
<dbReference type="Gene3D" id="3.30.70.870">
    <property type="entry name" value="Elongation Factor G (Translational Gtpase), domain 3"/>
    <property type="match status" value="1"/>
</dbReference>
<dbReference type="Gene3D" id="3.40.50.300">
    <property type="entry name" value="P-loop containing nucleotide triphosphate hydrolases"/>
    <property type="match status" value="1"/>
</dbReference>
<dbReference type="Gene3D" id="2.40.30.10">
    <property type="entry name" value="Translation factors"/>
    <property type="match status" value="1"/>
</dbReference>
<dbReference type="HAMAP" id="MF_00071">
    <property type="entry name" value="LepA"/>
    <property type="match status" value="1"/>
</dbReference>
<dbReference type="InterPro" id="IPR006297">
    <property type="entry name" value="EF-4"/>
</dbReference>
<dbReference type="InterPro" id="IPR035647">
    <property type="entry name" value="EFG_III/V"/>
</dbReference>
<dbReference type="InterPro" id="IPR000640">
    <property type="entry name" value="EFG_V-like"/>
</dbReference>
<dbReference type="InterPro" id="IPR031157">
    <property type="entry name" value="G_TR_CS"/>
</dbReference>
<dbReference type="InterPro" id="IPR038363">
    <property type="entry name" value="LepA_C_sf"/>
</dbReference>
<dbReference type="InterPro" id="IPR013842">
    <property type="entry name" value="LepA_CTD"/>
</dbReference>
<dbReference type="InterPro" id="IPR035654">
    <property type="entry name" value="LepA_IV"/>
</dbReference>
<dbReference type="InterPro" id="IPR027417">
    <property type="entry name" value="P-loop_NTPase"/>
</dbReference>
<dbReference type="InterPro" id="IPR005225">
    <property type="entry name" value="Small_GTP-bd"/>
</dbReference>
<dbReference type="InterPro" id="IPR000795">
    <property type="entry name" value="T_Tr_GTP-bd_dom"/>
</dbReference>
<dbReference type="InterPro" id="IPR009000">
    <property type="entry name" value="Transl_B-barrel_sf"/>
</dbReference>
<dbReference type="NCBIfam" id="TIGR01393">
    <property type="entry name" value="lepA"/>
    <property type="match status" value="1"/>
</dbReference>
<dbReference type="NCBIfam" id="TIGR00231">
    <property type="entry name" value="small_GTP"/>
    <property type="match status" value="1"/>
</dbReference>
<dbReference type="PANTHER" id="PTHR43512:SF7">
    <property type="entry name" value="TRANSLATION FACTOR GUF1, MITOCHONDRIAL"/>
    <property type="match status" value="1"/>
</dbReference>
<dbReference type="PANTHER" id="PTHR43512">
    <property type="entry name" value="TRANSLATION FACTOR GUF1-RELATED"/>
    <property type="match status" value="1"/>
</dbReference>
<dbReference type="Pfam" id="PF00679">
    <property type="entry name" value="EFG_C"/>
    <property type="match status" value="1"/>
</dbReference>
<dbReference type="Pfam" id="PF00009">
    <property type="entry name" value="GTP_EFTU"/>
    <property type="match status" value="1"/>
</dbReference>
<dbReference type="Pfam" id="PF06421">
    <property type="entry name" value="LepA_C"/>
    <property type="match status" value="1"/>
</dbReference>
<dbReference type="PRINTS" id="PR00315">
    <property type="entry name" value="ELONGATNFCT"/>
</dbReference>
<dbReference type="SUPFAM" id="SSF54980">
    <property type="entry name" value="EF-G C-terminal domain-like"/>
    <property type="match status" value="2"/>
</dbReference>
<dbReference type="SUPFAM" id="SSF52540">
    <property type="entry name" value="P-loop containing nucleoside triphosphate hydrolases"/>
    <property type="match status" value="1"/>
</dbReference>
<dbReference type="SUPFAM" id="SSF50447">
    <property type="entry name" value="Translation proteins"/>
    <property type="match status" value="1"/>
</dbReference>
<dbReference type="PROSITE" id="PS00301">
    <property type="entry name" value="G_TR_1"/>
    <property type="match status" value="1"/>
</dbReference>
<dbReference type="PROSITE" id="PS51722">
    <property type="entry name" value="G_TR_2"/>
    <property type="match status" value="1"/>
</dbReference>
<organism>
    <name type="scientific">Vanderwaltozyma polyspora (strain ATCC 22028 / DSM 70294 / BCRC 21397 / CBS 2163 / NBRC 10782 / NRRL Y-8283 / UCD 57-17)</name>
    <name type="common">Kluyveromyces polysporus</name>
    <dbReference type="NCBI Taxonomy" id="436907"/>
    <lineage>
        <taxon>Eukaryota</taxon>
        <taxon>Fungi</taxon>
        <taxon>Dikarya</taxon>
        <taxon>Ascomycota</taxon>
        <taxon>Saccharomycotina</taxon>
        <taxon>Saccharomycetes</taxon>
        <taxon>Saccharomycetales</taxon>
        <taxon>Saccharomycetaceae</taxon>
        <taxon>Vanderwaltozyma</taxon>
    </lineage>
</organism>
<reference key="1">
    <citation type="journal article" date="2007" name="Proc. Natl. Acad. Sci. U.S.A.">
        <title>Independent sorting-out of thousands of duplicated gene pairs in two yeast species descended from a whole-genome duplication.</title>
        <authorList>
            <person name="Scannell D.R."/>
            <person name="Frank A.C."/>
            <person name="Conant G.C."/>
            <person name="Byrne K.P."/>
            <person name="Woolfit M."/>
            <person name="Wolfe K.H."/>
        </authorList>
    </citation>
    <scope>NUCLEOTIDE SEQUENCE [LARGE SCALE GENOMIC DNA]</scope>
    <source>
        <strain>ATCC 22028 / DSM 70294 / BCRC 21397 / CBS 2163 / NBRC 10782 / NRRL Y-8283 / UCD 57-17</strain>
    </source>
</reference>
<keyword id="KW-0342">GTP-binding</keyword>
<keyword id="KW-0378">Hydrolase</keyword>
<keyword id="KW-0472">Membrane</keyword>
<keyword id="KW-0496">Mitochondrion</keyword>
<keyword id="KW-0999">Mitochondrion inner membrane</keyword>
<keyword id="KW-0547">Nucleotide-binding</keyword>
<keyword id="KW-0648">Protein biosynthesis</keyword>
<keyword id="KW-1185">Reference proteome</keyword>
<name>GUF1_VANPO</name>
<gene>
    <name evidence="1" type="primary">GUF1</name>
    <name type="ORF">Kpol_1009p8</name>
</gene>
<evidence type="ECO:0000255" key="1">
    <source>
        <dbReference type="HAMAP-Rule" id="MF_03137"/>
    </source>
</evidence>
<evidence type="ECO:0000305" key="2"/>
<accession>A7TPD4</accession>
<protein>
    <recommendedName>
        <fullName evidence="1">Translation factor GUF1, mitochondrial</fullName>
        <ecNumber>3.6.5.-</ecNumber>
    </recommendedName>
    <alternativeName>
        <fullName evidence="1">Elongation factor 4 homolog</fullName>
        <shortName evidence="1">EF-4</shortName>
    </alternativeName>
    <alternativeName>
        <fullName evidence="1">GTPase GUF1</fullName>
    </alternativeName>
    <alternativeName>
        <fullName evidence="1">Ribosomal back-translocase</fullName>
    </alternativeName>
</protein>
<comment type="function">
    <text evidence="1">Promotes mitochondrial protein synthesis. May act as a fidelity factor of the translation reaction, by catalyzing a one-codon backward translocation of tRNAs on improperly translocated ribosomes. Binds to mitochondrial ribosomes in a GTP-dependent manner.</text>
</comment>
<comment type="catalytic activity">
    <reaction evidence="1">
        <text>GTP + H2O = GDP + phosphate + H(+)</text>
        <dbReference type="Rhea" id="RHEA:19669"/>
        <dbReference type="ChEBI" id="CHEBI:15377"/>
        <dbReference type="ChEBI" id="CHEBI:15378"/>
        <dbReference type="ChEBI" id="CHEBI:37565"/>
        <dbReference type="ChEBI" id="CHEBI:43474"/>
        <dbReference type="ChEBI" id="CHEBI:58189"/>
    </reaction>
</comment>
<comment type="subcellular location">
    <subcellularLocation>
        <location evidence="1">Mitochondrion inner membrane</location>
        <topology evidence="1">Peripheral membrane protein</topology>
        <orientation evidence="1">Matrix side</orientation>
    </subcellularLocation>
</comment>
<comment type="miscellaneous">
    <text evidence="1">This protein may be expected to contain an N-terminal transit peptide but none has been predicted.</text>
</comment>
<comment type="similarity">
    <text evidence="2">Belongs to the TRAFAC class translation factor GTPase superfamily. Classic translation factor GTPase family. LepA subfamily.</text>
</comment>
<proteinExistence type="inferred from homology"/>
<sequence length="658" mass="74122">MWRNGIVYRAVKNFVRHNSTNNAAKNLKSIKVEDIQNRIENIPIENYRNFSIVAHIDHGKSTLSDRLLEITGVISKTEGTSGQRVLDKLEVEKERGITIKAQTCSMIYNDKRNGQDFLLHLIDTPGHVDFRDEVSRSYKACNGAILLVDASKGVQSQTVANFYLAYSMGLKLIPVINKIDLNVAEVEKTAGQIESTFEMSQDEIIKVSSKSGINIQEKLLPAVIDRIPPPTGIKNKPFRALLVDSWYDSYLGVVLLVHVVDGSIKKGDKISSAITQMKYEIKEIGIMHPDRVNTGKLTTGQVGYIVPGMKNSQDAKIGDTFMKVGLESQTEILPGFEETKPMVFVGAFPADGVEFKALDDDINRLVLNDKSVTIEMENSNALGQGWRLGFLGSLHASVFKERLEKEYGSQLIITQPTVPYLIEYEDGTIKEVTNPNEFPTNRKAKGVKSIANVQEPYVEAIMTLPDEYLGNVITLCDNHRGKQVEIKYMDSGQSNAIKQVMLRYEIPLFELVDNFFGRLKSVSQGYATLDYEDIGFRPSDIVKLELLINGTTIDAITSILHRSKVNKVGTEWVKNFKKYVKSQQYEVVIQARINNSKIIARETIKARRKDVLAKLHASDITRRKKLLVKQKEGKKKLKMRSIGNIQINTDAYQEFLRR</sequence>
<feature type="chain" id="PRO_0000402908" description="Translation factor GUF1, mitochondrial">
    <location>
        <begin position="1"/>
        <end position="658"/>
    </location>
</feature>
<feature type="domain" description="tr-type G">
    <location>
        <begin position="45"/>
        <end position="231"/>
    </location>
</feature>
<feature type="binding site" evidence="1">
    <location>
        <begin position="54"/>
        <end position="61"/>
    </location>
    <ligand>
        <name>GTP</name>
        <dbReference type="ChEBI" id="CHEBI:37565"/>
    </ligand>
</feature>
<feature type="binding site" evidence="1">
    <location>
        <begin position="123"/>
        <end position="127"/>
    </location>
    <ligand>
        <name>GTP</name>
        <dbReference type="ChEBI" id="CHEBI:37565"/>
    </ligand>
</feature>
<feature type="binding site" evidence="1">
    <location>
        <begin position="177"/>
        <end position="180"/>
    </location>
    <ligand>
        <name>GTP</name>
        <dbReference type="ChEBI" id="CHEBI:37565"/>
    </ligand>
</feature>